<accession>A6Q194</accession>
<organism>
    <name type="scientific">Nitratiruptor sp. (strain SB155-2)</name>
    <dbReference type="NCBI Taxonomy" id="387092"/>
    <lineage>
        <taxon>Bacteria</taxon>
        <taxon>Pseudomonadati</taxon>
        <taxon>Campylobacterota</taxon>
        <taxon>Epsilonproteobacteria</taxon>
        <taxon>Nautiliales</taxon>
        <taxon>Nitratiruptoraceae</taxon>
        <taxon>Nitratiruptor</taxon>
    </lineage>
</organism>
<keyword id="KW-1185">Reference proteome</keyword>
<keyword id="KW-0687">Ribonucleoprotein</keyword>
<keyword id="KW-0689">Ribosomal protein</keyword>
<protein>
    <recommendedName>
        <fullName evidence="1">Small ribosomal subunit protein bS21</fullName>
    </recommendedName>
    <alternativeName>
        <fullName evidence="2">30S ribosomal protein S21</fullName>
    </alternativeName>
</protein>
<evidence type="ECO:0000255" key="1">
    <source>
        <dbReference type="HAMAP-Rule" id="MF_00358"/>
    </source>
</evidence>
<evidence type="ECO:0000305" key="2"/>
<reference key="1">
    <citation type="journal article" date="2007" name="Proc. Natl. Acad. Sci. U.S.A.">
        <title>Deep-sea vent epsilon-proteobacterial genomes provide insights into emergence of pathogens.</title>
        <authorList>
            <person name="Nakagawa S."/>
            <person name="Takaki Y."/>
            <person name="Shimamura S."/>
            <person name="Reysenbach A.-L."/>
            <person name="Takai K."/>
            <person name="Horikoshi K."/>
        </authorList>
    </citation>
    <scope>NUCLEOTIDE SEQUENCE [LARGE SCALE GENOMIC DNA]</scope>
    <source>
        <strain>SB155-2</strain>
    </source>
</reference>
<sequence>MPGILVRPDQSFEEAYRLFKKQVDRNLIVTEARARRFYEKPTERRKKEKIAARKKMLKRLYMLRRYESRL</sequence>
<gene>
    <name evidence="1" type="primary">rpsU</name>
    <name type="ordered locus">NIS_0138</name>
</gene>
<name>RS21_NITSB</name>
<comment type="similarity">
    <text evidence="1">Belongs to the bacterial ribosomal protein bS21 family.</text>
</comment>
<proteinExistence type="inferred from homology"/>
<feature type="chain" id="PRO_1000005140" description="Small ribosomal subunit protein bS21">
    <location>
        <begin position="1"/>
        <end position="70"/>
    </location>
</feature>
<dbReference type="EMBL" id="AP009178">
    <property type="protein sequence ID" value="BAF69253.1"/>
    <property type="molecule type" value="Genomic_DNA"/>
</dbReference>
<dbReference type="RefSeq" id="WP_011979679.1">
    <property type="nucleotide sequence ID" value="NC_009662.1"/>
</dbReference>
<dbReference type="SMR" id="A6Q194"/>
<dbReference type="FunCoup" id="A6Q194">
    <property type="interactions" value="424"/>
</dbReference>
<dbReference type="STRING" id="387092.NIS_0138"/>
<dbReference type="KEGG" id="nis:NIS_0138"/>
<dbReference type="eggNOG" id="COG0828">
    <property type="taxonomic scope" value="Bacteria"/>
</dbReference>
<dbReference type="HOGENOM" id="CLU_159258_1_1_7"/>
<dbReference type="InParanoid" id="A6Q194"/>
<dbReference type="OrthoDB" id="9799244at2"/>
<dbReference type="Proteomes" id="UP000001118">
    <property type="component" value="Chromosome"/>
</dbReference>
<dbReference type="GO" id="GO:1990904">
    <property type="term" value="C:ribonucleoprotein complex"/>
    <property type="evidence" value="ECO:0007669"/>
    <property type="project" value="UniProtKB-KW"/>
</dbReference>
<dbReference type="GO" id="GO:0005840">
    <property type="term" value="C:ribosome"/>
    <property type="evidence" value="ECO:0007669"/>
    <property type="project" value="UniProtKB-KW"/>
</dbReference>
<dbReference type="GO" id="GO:0003735">
    <property type="term" value="F:structural constituent of ribosome"/>
    <property type="evidence" value="ECO:0007669"/>
    <property type="project" value="InterPro"/>
</dbReference>
<dbReference type="GO" id="GO:0006412">
    <property type="term" value="P:translation"/>
    <property type="evidence" value="ECO:0007669"/>
    <property type="project" value="UniProtKB-UniRule"/>
</dbReference>
<dbReference type="Gene3D" id="1.20.5.1150">
    <property type="entry name" value="Ribosomal protein S8"/>
    <property type="match status" value="1"/>
</dbReference>
<dbReference type="HAMAP" id="MF_00358">
    <property type="entry name" value="Ribosomal_bS21"/>
    <property type="match status" value="1"/>
</dbReference>
<dbReference type="InterPro" id="IPR001911">
    <property type="entry name" value="Ribosomal_bS21"/>
</dbReference>
<dbReference type="InterPro" id="IPR038380">
    <property type="entry name" value="Ribosomal_bS21_sf"/>
</dbReference>
<dbReference type="NCBIfam" id="TIGR00030">
    <property type="entry name" value="S21p"/>
    <property type="match status" value="1"/>
</dbReference>
<dbReference type="Pfam" id="PF01165">
    <property type="entry name" value="Ribosomal_S21"/>
    <property type="match status" value="1"/>
</dbReference>
<dbReference type="PRINTS" id="PR00976">
    <property type="entry name" value="RIBOSOMALS21"/>
</dbReference>